<comment type="function">
    <text evidence="1">Part of the Sec protein translocase complex. Interacts with the SecYEG preprotein conducting channel. Has a central role in coupling the hydrolysis of ATP to the transfer of proteins into and across the cell membrane, serving as an ATP-driven molecular motor driving the stepwise translocation of polypeptide chains across the membrane.</text>
</comment>
<comment type="catalytic activity">
    <reaction evidence="1">
        <text>ATP + H2O + cellular proteinSide 1 = ADP + phosphate + cellular proteinSide 2.</text>
        <dbReference type="EC" id="7.4.2.8"/>
    </reaction>
</comment>
<comment type="subunit">
    <text evidence="1">Monomer and homodimer. Part of the essential Sec protein translocation apparatus which comprises SecA, SecYEG and auxiliary proteins SecDF. Other proteins may also be involved.</text>
</comment>
<comment type="subcellular location">
    <subcellularLocation>
        <location evidence="1">Cell membrane</location>
        <topology evidence="1">Peripheral membrane protein</topology>
        <orientation evidence="1">Cytoplasmic side</orientation>
    </subcellularLocation>
    <subcellularLocation>
        <location evidence="1">Cytoplasm</location>
    </subcellularLocation>
    <text evidence="1">Distribution is 50-50.</text>
</comment>
<comment type="similarity">
    <text evidence="1">Belongs to the SecA family.</text>
</comment>
<name>SECA2_MYCUA</name>
<feature type="chain" id="PRO_0000318391" description="Protein translocase subunit SecA 2">
    <location>
        <begin position="1"/>
        <end position="806"/>
    </location>
</feature>
<feature type="binding site" evidence="1">
    <location>
        <position position="122"/>
    </location>
    <ligand>
        <name>ATP</name>
        <dbReference type="ChEBI" id="CHEBI:30616"/>
    </ligand>
</feature>
<feature type="binding site" evidence="1">
    <location>
        <begin position="140"/>
        <end position="144"/>
    </location>
    <ligand>
        <name>ATP</name>
        <dbReference type="ChEBI" id="CHEBI:30616"/>
    </ligand>
</feature>
<feature type="binding site" evidence="1">
    <location>
        <position position="533"/>
    </location>
    <ligand>
        <name>ATP</name>
        <dbReference type="ChEBI" id="CHEBI:30616"/>
    </ligand>
</feature>
<evidence type="ECO:0000255" key="1">
    <source>
        <dbReference type="HAMAP-Rule" id="MF_01382"/>
    </source>
</evidence>
<dbReference type="EC" id="7.4.2.8" evidence="1"/>
<dbReference type="EMBL" id="CP000325">
    <property type="protein sequence ID" value="ABL05290.1"/>
    <property type="molecule type" value="Genomic_DNA"/>
</dbReference>
<dbReference type="SMR" id="A0PSH1"/>
<dbReference type="KEGG" id="mul:MUL_3040"/>
<dbReference type="eggNOG" id="COG0653">
    <property type="taxonomic scope" value="Bacteria"/>
</dbReference>
<dbReference type="HOGENOM" id="CLU_005314_3_2_11"/>
<dbReference type="Proteomes" id="UP000000765">
    <property type="component" value="Chromosome"/>
</dbReference>
<dbReference type="GO" id="GO:0031522">
    <property type="term" value="C:cell envelope Sec protein transport complex"/>
    <property type="evidence" value="ECO:0007669"/>
    <property type="project" value="TreeGrafter"/>
</dbReference>
<dbReference type="GO" id="GO:0005829">
    <property type="term" value="C:cytosol"/>
    <property type="evidence" value="ECO:0007669"/>
    <property type="project" value="TreeGrafter"/>
</dbReference>
<dbReference type="GO" id="GO:0005886">
    <property type="term" value="C:plasma membrane"/>
    <property type="evidence" value="ECO:0007669"/>
    <property type="project" value="UniProtKB-SubCell"/>
</dbReference>
<dbReference type="GO" id="GO:0005524">
    <property type="term" value="F:ATP binding"/>
    <property type="evidence" value="ECO:0007669"/>
    <property type="project" value="UniProtKB-UniRule"/>
</dbReference>
<dbReference type="GO" id="GO:0008564">
    <property type="term" value="F:protein-exporting ATPase activity"/>
    <property type="evidence" value="ECO:0007669"/>
    <property type="project" value="UniProtKB-EC"/>
</dbReference>
<dbReference type="GO" id="GO:0065002">
    <property type="term" value="P:intracellular protein transmembrane transport"/>
    <property type="evidence" value="ECO:0007669"/>
    <property type="project" value="UniProtKB-UniRule"/>
</dbReference>
<dbReference type="GO" id="GO:0017038">
    <property type="term" value="P:protein import"/>
    <property type="evidence" value="ECO:0007669"/>
    <property type="project" value="InterPro"/>
</dbReference>
<dbReference type="GO" id="GO:0006605">
    <property type="term" value="P:protein targeting"/>
    <property type="evidence" value="ECO:0007669"/>
    <property type="project" value="UniProtKB-UniRule"/>
</dbReference>
<dbReference type="GO" id="GO:0043952">
    <property type="term" value="P:protein transport by the Sec complex"/>
    <property type="evidence" value="ECO:0007669"/>
    <property type="project" value="TreeGrafter"/>
</dbReference>
<dbReference type="CDD" id="cd17928">
    <property type="entry name" value="DEXDc_SecA"/>
    <property type="match status" value="1"/>
</dbReference>
<dbReference type="CDD" id="cd18803">
    <property type="entry name" value="SF2_C_secA"/>
    <property type="match status" value="1"/>
</dbReference>
<dbReference type="FunFam" id="3.40.50.300:FF:000429">
    <property type="entry name" value="Preprotein translocase subunit SecA"/>
    <property type="match status" value="1"/>
</dbReference>
<dbReference type="FunFam" id="1.10.3060.10:FF:000010">
    <property type="entry name" value="Protein translocase subunit SecA 2"/>
    <property type="match status" value="1"/>
</dbReference>
<dbReference type="Gene3D" id="1.10.3060.10">
    <property type="entry name" value="Helical scaffold and wing domains of SecA"/>
    <property type="match status" value="2"/>
</dbReference>
<dbReference type="Gene3D" id="3.40.50.300">
    <property type="entry name" value="P-loop containing nucleotide triphosphate hydrolases"/>
    <property type="match status" value="3"/>
</dbReference>
<dbReference type="Gene3D" id="3.90.1440.10">
    <property type="entry name" value="SecA, preprotein cross-linking domain"/>
    <property type="match status" value="1"/>
</dbReference>
<dbReference type="HAMAP" id="MF_01382">
    <property type="entry name" value="SecA"/>
    <property type="match status" value="1"/>
</dbReference>
<dbReference type="InterPro" id="IPR014001">
    <property type="entry name" value="Helicase_ATP-bd"/>
</dbReference>
<dbReference type="InterPro" id="IPR001650">
    <property type="entry name" value="Helicase_C-like"/>
</dbReference>
<dbReference type="InterPro" id="IPR027417">
    <property type="entry name" value="P-loop_NTPase"/>
</dbReference>
<dbReference type="InterPro" id="IPR000185">
    <property type="entry name" value="SecA"/>
</dbReference>
<dbReference type="InterPro" id="IPR026389">
    <property type="entry name" value="SecA_Actinobact-type"/>
</dbReference>
<dbReference type="InterPro" id="IPR020937">
    <property type="entry name" value="SecA_CS"/>
</dbReference>
<dbReference type="InterPro" id="IPR011115">
    <property type="entry name" value="SecA_DEAD"/>
</dbReference>
<dbReference type="InterPro" id="IPR014018">
    <property type="entry name" value="SecA_motor_DEAD"/>
</dbReference>
<dbReference type="InterPro" id="IPR011130">
    <property type="entry name" value="SecA_preprotein_X-link_dom"/>
</dbReference>
<dbReference type="InterPro" id="IPR044722">
    <property type="entry name" value="SecA_SF2_C"/>
</dbReference>
<dbReference type="InterPro" id="IPR011116">
    <property type="entry name" value="SecA_Wing/Scaffold"/>
</dbReference>
<dbReference type="InterPro" id="IPR036266">
    <property type="entry name" value="SecA_Wing/Scaffold_sf"/>
</dbReference>
<dbReference type="InterPro" id="IPR036670">
    <property type="entry name" value="SecA_X-link_sf"/>
</dbReference>
<dbReference type="NCBIfam" id="TIGR04221">
    <property type="entry name" value="SecA2_Mycobac"/>
    <property type="match status" value="1"/>
</dbReference>
<dbReference type="PANTHER" id="PTHR30612:SF0">
    <property type="entry name" value="CHLOROPLAST PROTEIN-TRANSPORTING ATPASE"/>
    <property type="match status" value="1"/>
</dbReference>
<dbReference type="PANTHER" id="PTHR30612">
    <property type="entry name" value="SECA INNER MEMBRANE COMPONENT OF SEC PROTEIN SECRETION SYSTEM"/>
    <property type="match status" value="1"/>
</dbReference>
<dbReference type="Pfam" id="PF21090">
    <property type="entry name" value="P-loop_SecA"/>
    <property type="match status" value="1"/>
</dbReference>
<dbReference type="Pfam" id="PF07517">
    <property type="entry name" value="SecA_DEAD"/>
    <property type="match status" value="1"/>
</dbReference>
<dbReference type="Pfam" id="PF01043">
    <property type="entry name" value="SecA_PP_bind"/>
    <property type="match status" value="1"/>
</dbReference>
<dbReference type="Pfam" id="PF07516">
    <property type="entry name" value="SecA_SW"/>
    <property type="match status" value="1"/>
</dbReference>
<dbReference type="PRINTS" id="PR00906">
    <property type="entry name" value="SECA"/>
</dbReference>
<dbReference type="SMART" id="SM00957">
    <property type="entry name" value="SecA_DEAD"/>
    <property type="match status" value="1"/>
</dbReference>
<dbReference type="SMART" id="SM00958">
    <property type="entry name" value="SecA_PP_bind"/>
    <property type="match status" value="1"/>
</dbReference>
<dbReference type="SUPFAM" id="SSF81886">
    <property type="entry name" value="Helical scaffold and wing domains of SecA"/>
    <property type="match status" value="1"/>
</dbReference>
<dbReference type="SUPFAM" id="SSF52540">
    <property type="entry name" value="P-loop containing nucleoside triphosphate hydrolases"/>
    <property type="match status" value="2"/>
</dbReference>
<dbReference type="SUPFAM" id="SSF81767">
    <property type="entry name" value="Pre-protein crosslinking domain of SecA"/>
    <property type="match status" value="1"/>
</dbReference>
<dbReference type="PROSITE" id="PS01312">
    <property type="entry name" value="SECA"/>
    <property type="match status" value="1"/>
</dbReference>
<dbReference type="PROSITE" id="PS51196">
    <property type="entry name" value="SECA_MOTOR_DEAD"/>
    <property type="match status" value="1"/>
</dbReference>
<organism>
    <name type="scientific">Mycobacterium ulcerans (strain Agy99)</name>
    <dbReference type="NCBI Taxonomy" id="362242"/>
    <lineage>
        <taxon>Bacteria</taxon>
        <taxon>Bacillati</taxon>
        <taxon>Actinomycetota</taxon>
        <taxon>Actinomycetes</taxon>
        <taxon>Mycobacteriales</taxon>
        <taxon>Mycobacteriaceae</taxon>
        <taxon>Mycobacterium</taxon>
        <taxon>Mycobacterium ulcerans group</taxon>
    </lineage>
</organism>
<proteinExistence type="inferred from homology"/>
<sequence>MRSCTAAPGVSRTNTHARRGLGVAYRWAVSKTTRAQSGRLSSRFWRLLGATTEKNQNRSLAQVTASAEFDKEAADLNDEKLRKAAGLLNLEDLADSADIPQFLAIAREAGERATGLRPFDVQLLGALRMLAGDVIEMATGEGKTLAGAIAAAGYALGGRHVHVVTINDYLARRDAEWMAPLLEAMDLTVGWITAESTGADRRAAYECDVTYASVNEIGFDVLRDQLVTDVADLVSPNPDVALIDEADSVLVDEALVPLVLAGTTHRETPRLEIIKLVAQLVKDKDADEYFATDADSRNVHLTEAGARKVEKALGGIDLYSEEHVGTTLTEVNVALHAHVLLQRDVHYIVRDDAVHLINASRGRIAQLQRWPDGLQAAVEAKEGIETTETGEVLDTITVQALINRYVTVCGMTGTALAAGEQLRQFYKLGVSPIPPNTPNIREDESDRVYITAAAKNDAIVEHIAEVHDTGQPVLVGTRDVAESEDLHERLLRRDIPAVVLNAKNDAEEAAVIAEAGTLSRVTVSTQMAGRGTDIRLGGSDEADHDQVAELGGLHVVGTGRHHTQRLDNQLRGRAGRQGDPGSSVFFSSWEDDVVAANLDGNKLPMETDEDGQIVSAKAAGLLDHAQRVAEGRMLDVHANTWRYNQLIAQQRAIIVDRRNTLLRTATAREELADLAPKRYKELSETVSEHRLEKICRMIMLYHLDRGWADHLAYLADIRESIHLRALGRQNPLDEFHRMAVDAFASLAADAIEAAQQTFETANVLEDEPGLDLSKLARPTSTWTYMVNDNPLSDDTLSTLSLPGVFR</sequence>
<protein>
    <recommendedName>
        <fullName evidence="1">Protein translocase subunit SecA 2</fullName>
        <ecNumber evidence="1">7.4.2.8</ecNumber>
    </recommendedName>
</protein>
<keyword id="KW-0067">ATP-binding</keyword>
<keyword id="KW-1003">Cell membrane</keyword>
<keyword id="KW-0963">Cytoplasm</keyword>
<keyword id="KW-0472">Membrane</keyword>
<keyword id="KW-0547">Nucleotide-binding</keyword>
<keyword id="KW-0653">Protein transport</keyword>
<keyword id="KW-1278">Translocase</keyword>
<keyword id="KW-0811">Translocation</keyword>
<keyword id="KW-0813">Transport</keyword>
<accession>A0PSH1</accession>
<gene>
    <name evidence="1" type="primary">secA2</name>
    <name type="ordered locus">MUL_3040</name>
</gene>
<reference key="1">
    <citation type="journal article" date="2007" name="Genome Res.">
        <title>Reductive evolution and niche adaptation inferred from the genome of Mycobacterium ulcerans, the causative agent of Buruli ulcer.</title>
        <authorList>
            <person name="Stinear T.P."/>
            <person name="Seemann T."/>
            <person name="Pidot S."/>
            <person name="Frigui W."/>
            <person name="Reysset G."/>
            <person name="Garnier T."/>
            <person name="Meurice G."/>
            <person name="Simon D."/>
            <person name="Bouchier C."/>
            <person name="Ma L."/>
            <person name="Tichit M."/>
            <person name="Porter J.L."/>
            <person name="Ryan J."/>
            <person name="Johnson P.D.R."/>
            <person name="Davies J.K."/>
            <person name="Jenkin G.A."/>
            <person name="Small P.L.C."/>
            <person name="Jones L.M."/>
            <person name="Tekaia F."/>
            <person name="Laval F."/>
            <person name="Daffe M."/>
            <person name="Parkhill J."/>
            <person name="Cole S.T."/>
        </authorList>
    </citation>
    <scope>NUCLEOTIDE SEQUENCE [LARGE SCALE GENOMIC DNA]</scope>
    <source>
        <strain>Agy99</strain>
    </source>
</reference>